<comment type="catalytic activity">
    <reaction evidence="1">
        <text>N(2)-acetyl-L-ornithine + 2-oxoglutarate = N-acetyl-L-glutamate 5-semialdehyde + L-glutamate</text>
        <dbReference type="Rhea" id="RHEA:18049"/>
        <dbReference type="ChEBI" id="CHEBI:16810"/>
        <dbReference type="ChEBI" id="CHEBI:29123"/>
        <dbReference type="ChEBI" id="CHEBI:29985"/>
        <dbReference type="ChEBI" id="CHEBI:57805"/>
        <dbReference type="EC" id="2.6.1.11"/>
    </reaction>
</comment>
<comment type="cofactor">
    <cofactor evidence="1">
        <name>pyridoxal 5'-phosphate</name>
        <dbReference type="ChEBI" id="CHEBI:597326"/>
    </cofactor>
    <text evidence="1">Binds 1 pyridoxal phosphate per subunit.</text>
</comment>
<comment type="pathway">
    <text evidence="1">Amino-acid biosynthesis; L-arginine biosynthesis; N(2)-acetyl-L-ornithine from L-glutamate: step 4/4.</text>
</comment>
<comment type="subunit">
    <text evidence="1">Homodimer.</text>
</comment>
<comment type="subcellular location">
    <subcellularLocation>
        <location evidence="1">Cytoplasm</location>
    </subcellularLocation>
</comment>
<comment type="miscellaneous">
    <text evidence="1">May also have succinyldiaminopimelate aminotransferase activity, thus carrying out the corresponding step in lysine biosynthesis.</text>
</comment>
<comment type="similarity">
    <text evidence="1">Belongs to the class-III pyridoxal-phosphate-dependent aminotransferase family. ArgD subfamily.</text>
</comment>
<sequence>MSQENWIDLEKKYHLQIYGRLPVVLVEGKGMEVYDIDGKKYLDFLAGIGVNNVGHCHPKVVEAIKKQAETLIHTSNIYYTIPQIKLAKKLVELSGLDRAFFCNSGAEANEGAIKFARKYVSKVLGREGGEIISMYNAFHGRTLTTLAATPKPKYQDGFYPLPPGFKYVPFNDIEALKEAITDKTAAIMIEPVQGEGGIHVADKDYLKAVRDLCDDKNIVLIFDEVQCGMGRTGRMFAFEHYGVEPDILTLAKALGGGVPIGAVVLKEEIAKALSYGDHGTTFGGNPLACSAALASVEVIEELIKDDKVIEKGKYFIRKLENLIEKYNFIKEVRGLGLMIGAELEFNGADIVKKMLEKGFLINCTSDTVLRFLPPLIVEKEHIDALINALDEVFTEIKK</sequence>
<name>ARGD_METJA</name>
<dbReference type="EC" id="2.6.1.11" evidence="1"/>
<dbReference type="EMBL" id="L77117">
    <property type="protein sequence ID" value="AAB98717.1"/>
    <property type="molecule type" value="Genomic_DNA"/>
</dbReference>
<dbReference type="PIR" id="A64390">
    <property type="entry name" value="A64390"/>
</dbReference>
<dbReference type="RefSeq" id="WP_010870226.1">
    <property type="nucleotide sequence ID" value="NC_000909.1"/>
</dbReference>
<dbReference type="SMR" id="Q58131"/>
<dbReference type="FunCoup" id="Q58131">
    <property type="interactions" value="214"/>
</dbReference>
<dbReference type="STRING" id="243232.MJ_0721"/>
<dbReference type="PaxDb" id="243232-MJ_0721"/>
<dbReference type="EnsemblBacteria" id="AAB98717">
    <property type="protein sequence ID" value="AAB98717"/>
    <property type="gene ID" value="MJ_0721"/>
</dbReference>
<dbReference type="GeneID" id="1451598"/>
<dbReference type="KEGG" id="mja:MJ_0721"/>
<dbReference type="eggNOG" id="arCOG00914">
    <property type="taxonomic scope" value="Archaea"/>
</dbReference>
<dbReference type="HOGENOM" id="CLU_016922_10_1_2"/>
<dbReference type="InParanoid" id="Q58131"/>
<dbReference type="OrthoDB" id="85346at2157"/>
<dbReference type="PhylomeDB" id="Q58131"/>
<dbReference type="UniPathway" id="UPA00068">
    <property type="reaction ID" value="UER00109"/>
</dbReference>
<dbReference type="Proteomes" id="UP000000805">
    <property type="component" value="Chromosome"/>
</dbReference>
<dbReference type="GO" id="GO:0005737">
    <property type="term" value="C:cytoplasm"/>
    <property type="evidence" value="ECO:0007669"/>
    <property type="project" value="UniProtKB-SubCell"/>
</dbReference>
<dbReference type="GO" id="GO:0042802">
    <property type="term" value="F:identical protein binding"/>
    <property type="evidence" value="ECO:0000318"/>
    <property type="project" value="GO_Central"/>
</dbReference>
<dbReference type="GO" id="GO:0003992">
    <property type="term" value="F:N2-acetyl-L-ornithine:2-oxoglutarate 5-aminotransferase activity"/>
    <property type="evidence" value="ECO:0007669"/>
    <property type="project" value="UniProtKB-UniRule"/>
</dbReference>
<dbReference type="GO" id="GO:0030170">
    <property type="term" value="F:pyridoxal phosphate binding"/>
    <property type="evidence" value="ECO:0000318"/>
    <property type="project" value="GO_Central"/>
</dbReference>
<dbReference type="GO" id="GO:0006526">
    <property type="term" value="P:L-arginine biosynthetic process"/>
    <property type="evidence" value="ECO:0007669"/>
    <property type="project" value="UniProtKB-UniRule"/>
</dbReference>
<dbReference type="CDD" id="cd00610">
    <property type="entry name" value="OAT_like"/>
    <property type="match status" value="1"/>
</dbReference>
<dbReference type="FunFam" id="3.40.640.10:FF:000004">
    <property type="entry name" value="Acetylornithine aminotransferase"/>
    <property type="match status" value="1"/>
</dbReference>
<dbReference type="Gene3D" id="3.90.1150.10">
    <property type="entry name" value="Aspartate Aminotransferase, domain 1"/>
    <property type="match status" value="1"/>
</dbReference>
<dbReference type="Gene3D" id="3.40.640.10">
    <property type="entry name" value="Type I PLP-dependent aspartate aminotransferase-like (Major domain)"/>
    <property type="match status" value="1"/>
</dbReference>
<dbReference type="HAMAP" id="MF_01107">
    <property type="entry name" value="ArgD_aminotrans_3"/>
    <property type="match status" value="1"/>
</dbReference>
<dbReference type="InterPro" id="IPR004636">
    <property type="entry name" value="AcOrn/SuccOrn_fam"/>
</dbReference>
<dbReference type="InterPro" id="IPR005814">
    <property type="entry name" value="Aminotrans_3"/>
</dbReference>
<dbReference type="InterPro" id="IPR049704">
    <property type="entry name" value="Aminotrans_3_PPA_site"/>
</dbReference>
<dbReference type="InterPro" id="IPR050103">
    <property type="entry name" value="Class-III_PLP-dep_AT"/>
</dbReference>
<dbReference type="InterPro" id="IPR015424">
    <property type="entry name" value="PyrdxlP-dep_Trfase"/>
</dbReference>
<dbReference type="InterPro" id="IPR015421">
    <property type="entry name" value="PyrdxlP-dep_Trfase_major"/>
</dbReference>
<dbReference type="InterPro" id="IPR015422">
    <property type="entry name" value="PyrdxlP-dep_Trfase_small"/>
</dbReference>
<dbReference type="NCBIfam" id="TIGR00707">
    <property type="entry name" value="argD"/>
    <property type="match status" value="1"/>
</dbReference>
<dbReference type="NCBIfam" id="NF002325">
    <property type="entry name" value="PRK01278.1"/>
    <property type="match status" value="1"/>
</dbReference>
<dbReference type="NCBIfam" id="NF002874">
    <property type="entry name" value="PRK03244.1"/>
    <property type="match status" value="1"/>
</dbReference>
<dbReference type="PANTHER" id="PTHR11986:SF79">
    <property type="entry name" value="ACETYLORNITHINE AMINOTRANSFERASE, MITOCHONDRIAL"/>
    <property type="match status" value="1"/>
</dbReference>
<dbReference type="PANTHER" id="PTHR11986">
    <property type="entry name" value="AMINOTRANSFERASE CLASS III"/>
    <property type="match status" value="1"/>
</dbReference>
<dbReference type="Pfam" id="PF00202">
    <property type="entry name" value="Aminotran_3"/>
    <property type="match status" value="1"/>
</dbReference>
<dbReference type="PIRSF" id="PIRSF000521">
    <property type="entry name" value="Transaminase_4ab_Lys_Orn"/>
    <property type="match status" value="1"/>
</dbReference>
<dbReference type="SUPFAM" id="SSF53383">
    <property type="entry name" value="PLP-dependent transferases"/>
    <property type="match status" value="1"/>
</dbReference>
<dbReference type="PROSITE" id="PS00600">
    <property type="entry name" value="AA_TRANSFER_CLASS_3"/>
    <property type="match status" value="1"/>
</dbReference>
<proteinExistence type="inferred from homology"/>
<feature type="chain" id="PRO_0000112821" description="Acetylornithine aminotransferase">
    <location>
        <begin position="1"/>
        <end position="398"/>
    </location>
</feature>
<feature type="binding site" evidence="1">
    <location>
        <begin position="105"/>
        <end position="106"/>
    </location>
    <ligand>
        <name>pyridoxal 5'-phosphate</name>
        <dbReference type="ChEBI" id="CHEBI:597326"/>
    </ligand>
</feature>
<feature type="binding site" evidence="1">
    <location>
        <position position="138"/>
    </location>
    <ligand>
        <name>pyridoxal 5'-phosphate</name>
        <dbReference type="ChEBI" id="CHEBI:597326"/>
    </ligand>
</feature>
<feature type="binding site" evidence="1">
    <location>
        <position position="141"/>
    </location>
    <ligand>
        <name>N(2)-acetyl-L-ornithine</name>
        <dbReference type="ChEBI" id="CHEBI:57805"/>
    </ligand>
</feature>
<feature type="binding site" evidence="1">
    <location>
        <begin position="223"/>
        <end position="226"/>
    </location>
    <ligand>
        <name>pyridoxal 5'-phosphate</name>
        <dbReference type="ChEBI" id="CHEBI:597326"/>
    </ligand>
</feature>
<feature type="binding site" evidence="1">
    <location>
        <position position="280"/>
    </location>
    <ligand>
        <name>N(2)-acetyl-L-ornithine</name>
        <dbReference type="ChEBI" id="CHEBI:57805"/>
    </ligand>
</feature>
<feature type="binding site" evidence="1">
    <location>
        <position position="281"/>
    </location>
    <ligand>
        <name>pyridoxal 5'-phosphate</name>
        <dbReference type="ChEBI" id="CHEBI:597326"/>
    </ligand>
</feature>
<feature type="modified residue" description="N6-(pyridoxal phosphate)lysine" evidence="1">
    <location>
        <position position="252"/>
    </location>
</feature>
<evidence type="ECO:0000255" key="1">
    <source>
        <dbReference type="HAMAP-Rule" id="MF_01107"/>
    </source>
</evidence>
<organism>
    <name type="scientific">Methanocaldococcus jannaschii (strain ATCC 43067 / DSM 2661 / JAL-1 / JCM 10045 / NBRC 100440)</name>
    <name type="common">Methanococcus jannaschii</name>
    <dbReference type="NCBI Taxonomy" id="243232"/>
    <lineage>
        <taxon>Archaea</taxon>
        <taxon>Methanobacteriati</taxon>
        <taxon>Methanobacteriota</taxon>
        <taxon>Methanomada group</taxon>
        <taxon>Methanococci</taxon>
        <taxon>Methanococcales</taxon>
        <taxon>Methanocaldococcaceae</taxon>
        <taxon>Methanocaldococcus</taxon>
    </lineage>
</organism>
<accession>Q58131</accession>
<keyword id="KW-0028">Amino-acid biosynthesis</keyword>
<keyword id="KW-0032">Aminotransferase</keyword>
<keyword id="KW-0055">Arginine biosynthesis</keyword>
<keyword id="KW-0963">Cytoplasm</keyword>
<keyword id="KW-0663">Pyridoxal phosphate</keyword>
<keyword id="KW-1185">Reference proteome</keyword>
<keyword id="KW-0808">Transferase</keyword>
<gene>
    <name evidence="1" type="primary">argD</name>
    <name type="ordered locus">MJ0721</name>
</gene>
<reference key="1">
    <citation type="journal article" date="1996" name="Science">
        <title>Complete genome sequence of the methanogenic archaeon, Methanococcus jannaschii.</title>
        <authorList>
            <person name="Bult C.J."/>
            <person name="White O."/>
            <person name="Olsen G.J."/>
            <person name="Zhou L."/>
            <person name="Fleischmann R.D."/>
            <person name="Sutton G.G."/>
            <person name="Blake J.A."/>
            <person name="FitzGerald L.M."/>
            <person name="Clayton R.A."/>
            <person name="Gocayne J.D."/>
            <person name="Kerlavage A.R."/>
            <person name="Dougherty B.A."/>
            <person name="Tomb J.-F."/>
            <person name="Adams M.D."/>
            <person name="Reich C.I."/>
            <person name="Overbeek R."/>
            <person name="Kirkness E.F."/>
            <person name="Weinstock K.G."/>
            <person name="Merrick J.M."/>
            <person name="Glodek A."/>
            <person name="Scott J.L."/>
            <person name="Geoghagen N.S.M."/>
            <person name="Weidman J.F."/>
            <person name="Fuhrmann J.L."/>
            <person name="Nguyen D."/>
            <person name="Utterback T.R."/>
            <person name="Kelley J.M."/>
            <person name="Peterson J.D."/>
            <person name="Sadow P.W."/>
            <person name="Hanna M.C."/>
            <person name="Cotton M.D."/>
            <person name="Roberts K.M."/>
            <person name="Hurst M.A."/>
            <person name="Kaine B.P."/>
            <person name="Borodovsky M."/>
            <person name="Klenk H.-P."/>
            <person name="Fraser C.M."/>
            <person name="Smith H.O."/>
            <person name="Woese C.R."/>
            <person name="Venter J.C."/>
        </authorList>
    </citation>
    <scope>NUCLEOTIDE SEQUENCE [LARGE SCALE GENOMIC DNA]</scope>
    <source>
        <strain>ATCC 43067 / DSM 2661 / JAL-1 / JCM 10045 / NBRC 100440</strain>
    </source>
</reference>
<protein>
    <recommendedName>
        <fullName evidence="1">Acetylornithine aminotransferase</fullName>
        <shortName evidence="1">ACOAT</shortName>
        <ecNumber evidence="1">2.6.1.11</ecNumber>
    </recommendedName>
</protein>